<reference key="1">
    <citation type="journal article" date="2005" name="Genome Biol.">
        <title>Full-length cDNAs from chicken bursal lymphocytes to facilitate gene function analysis.</title>
        <authorList>
            <person name="Caldwell R.B."/>
            <person name="Kierzek A.M."/>
            <person name="Arakawa H."/>
            <person name="Bezzubov Y."/>
            <person name="Zaim J."/>
            <person name="Fiedler P."/>
            <person name="Kutter S."/>
            <person name="Blagodatski A."/>
            <person name="Kostovska D."/>
            <person name="Koter M."/>
            <person name="Plachy J."/>
            <person name="Carninci P."/>
            <person name="Hayashizaki Y."/>
            <person name="Buerstedde J.-M."/>
        </authorList>
    </citation>
    <scope>NUCLEOTIDE SEQUENCE [LARGE SCALE MRNA]</scope>
    <source>
        <strain>CB</strain>
        <tissue>Bursa of Fabricius</tissue>
    </source>
</reference>
<keyword id="KW-0963">Cytoplasm</keyword>
<keyword id="KW-0507">mRNA processing</keyword>
<keyword id="KW-0508">mRNA splicing</keyword>
<keyword id="KW-1185">Reference proteome</keyword>
<keyword id="KW-0747">Spliceosome</keyword>
<feature type="chain" id="PRO_0000314566" description="Cysteine-rich PDZ-binding protein">
    <location>
        <begin position="1"/>
        <end position="101"/>
    </location>
</feature>
<organism>
    <name type="scientific">Gallus gallus</name>
    <name type="common">Chicken</name>
    <dbReference type="NCBI Taxonomy" id="9031"/>
    <lineage>
        <taxon>Eukaryota</taxon>
        <taxon>Metazoa</taxon>
        <taxon>Chordata</taxon>
        <taxon>Craniata</taxon>
        <taxon>Vertebrata</taxon>
        <taxon>Euteleostomi</taxon>
        <taxon>Archelosauria</taxon>
        <taxon>Archosauria</taxon>
        <taxon>Dinosauria</taxon>
        <taxon>Saurischia</taxon>
        <taxon>Theropoda</taxon>
        <taxon>Coelurosauria</taxon>
        <taxon>Aves</taxon>
        <taxon>Neognathae</taxon>
        <taxon>Galloanserae</taxon>
        <taxon>Galliformes</taxon>
        <taxon>Phasianidae</taxon>
        <taxon>Phasianinae</taxon>
        <taxon>Gallus</taxon>
    </lineage>
</organism>
<sequence length="101" mass="11256">MVCEKCERKLGTVITPDTWKDGARNTTESGGRKLNENKALTSKKARFDPYGKNKFAICRICKSSVHQPGSHYCQGCAYKKGICSMCGKKVLDTKNYKQTSV</sequence>
<gene>
    <name type="primary">CRIPT</name>
    <name type="ORF">RCJMB04_11o12</name>
</gene>
<proteinExistence type="inferred from homology"/>
<name>CRIPT_CHICK</name>
<protein>
    <recommendedName>
        <fullName>Cysteine-rich PDZ-binding protein</fullName>
    </recommendedName>
    <alternativeName>
        <fullName>Cysteine-rich interactor of PDZ three</fullName>
        <shortName>Cysteine-rich interactor of PDZ3</shortName>
    </alternativeName>
</protein>
<accession>Q5ZKB6</accession>
<dbReference type="EMBL" id="AJ720168">
    <property type="protein sequence ID" value="CAG31827.1"/>
    <property type="molecule type" value="mRNA"/>
</dbReference>
<dbReference type="RefSeq" id="NP_001026225.1">
    <property type="nucleotide sequence ID" value="NM_001031054.2"/>
</dbReference>
<dbReference type="SMR" id="Q5ZKB6"/>
<dbReference type="FunCoup" id="Q5ZKB6">
    <property type="interactions" value="462"/>
</dbReference>
<dbReference type="STRING" id="9031.ENSGALP00000016245"/>
<dbReference type="PaxDb" id="9031-ENSGALP00000016245"/>
<dbReference type="Ensembl" id="ENSGALT00010044573.1">
    <property type="protein sequence ID" value="ENSGALP00010026530.1"/>
    <property type="gene ID" value="ENSGALG00010018441.1"/>
</dbReference>
<dbReference type="GeneID" id="421412"/>
<dbReference type="KEGG" id="gga:421412"/>
<dbReference type="CTD" id="9419"/>
<dbReference type="VEuPathDB" id="HostDB:geneid_421412"/>
<dbReference type="eggNOG" id="KOG3476">
    <property type="taxonomic scope" value="Eukaryota"/>
</dbReference>
<dbReference type="GeneTree" id="ENSGT00950000183100"/>
<dbReference type="HOGENOM" id="CLU_133934_0_0_1"/>
<dbReference type="InParanoid" id="Q5ZKB6"/>
<dbReference type="OMA" id="MPCDKCE"/>
<dbReference type="OrthoDB" id="147332at2759"/>
<dbReference type="PhylomeDB" id="Q5ZKB6"/>
<dbReference type="TreeFam" id="TF300144"/>
<dbReference type="PRO" id="PR:Q5ZKB6"/>
<dbReference type="Proteomes" id="UP000000539">
    <property type="component" value="Chromosome 3"/>
</dbReference>
<dbReference type="Bgee" id="ENSGALG00000010014">
    <property type="expression patterns" value="Expressed in muscle tissue and 14 other cell types or tissues"/>
</dbReference>
<dbReference type="GO" id="GO:0005737">
    <property type="term" value="C:cytoplasm"/>
    <property type="evidence" value="ECO:0007669"/>
    <property type="project" value="UniProtKB-SubCell"/>
</dbReference>
<dbReference type="GO" id="GO:0030425">
    <property type="term" value="C:dendrite"/>
    <property type="evidence" value="ECO:0000318"/>
    <property type="project" value="GO_Central"/>
</dbReference>
<dbReference type="GO" id="GO:0005681">
    <property type="term" value="C:spliceosomal complex"/>
    <property type="evidence" value="ECO:0007669"/>
    <property type="project" value="UniProtKB-KW"/>
</dbReference>
<dbReference type="GO" id="GO:0008017">
    <property type="term" value="F:microtubule binding"/>
    <property type="evidence" value="ECO:0000318"/>
    <property type="project" value="GO_Central"/>
</dbReference>
<dbReference type="GO" id="GO:0031122">
    <property type="term" value="P:cytoplasmic microtubule organization"/>
    <property type="evidence" value="ECO:0000318"/>
    <property type="project" value="GO_Central"/>
</dbReference>
<dbReference type="GO" id="GO:0006397">
    <property type="term" value="P:mRNA processing"/>
    <property type="evidence" value="ECO:0007669"/>
    <property type="project" value="UniProtKB-KW"/>
</dbReference>
<dbReference type="GO" id="GO:0008380">
    <property type="term" value="P:RNA splicing"/>
    <property type="evidence" value="ECO:0007669"/>
    <property type="project" value="UniProtKB-KW"/>
</dbReference>
<dbReference type="InterPro" id="IPR019367">
    <property type="entry name" value="PDZ-binding_CRIPT"/>
</dbReference>
<dbReference type="PANTHER" id="PTHR11805">
    <property type="entry name" value="CYSTEINE-RICH PDZ-BINDING PROTEIN"/>
    <property type="match status" value="1"/>
</dbReference>
<dbReference type="PANTHER" id="PTHR11805:SF1">
    <property type="entry name" value="CYSTEINE-RICH PDZ-BINDING PROTEIN"/>
    <property type="match status" value="1"/>
</dbReference>
<dbReference type="Pfam" id="PF10235">
    <property type="entry name" value="Cript"/>
    <property type="match status" value="1"/>
</dbReference>
<evidence type="ECO:0000250" key="1"/>
<evidence type="ECO:0000250" key="2">
    <source>
        <dbReference type="UniProtKB" id="Q9P021"/>
    </source>
</evidence>
<evidence type="ECO:0000305" key="3"/>
<comment type="function">
    <text evidence="2">As a component of the minor spliceosome, involved in the splicing of U12-type introns in pre-mRNAs.</text>
</comment>
<comment type="subunit">
    <text evidence="2">Component of the minor spliceosome, which splices U12-type introns.</text>
</comment>
<comment type="subcellular location">
    <subcellularLocation>
        <location evidence="1">Cytoplasm</location>
    </subcellularLocation>
</comment>
<comment type="similarity">
    <text evidence="3">Belongs to the CRIPT family.</text>
</comment>